<sequence length="446" mass="48539">MRVLHVTSEVFPFSRSGGLGDVLGALPAVQATLGAQVSVLSPWYGSLAGAPEQIWAGDVADVGPVRVGELRQDGVRFLFLGLPEFEREGLYHPDDVWRFCTYGRAVLPVLRALNEVPDVLHGHDWQAGLVVAHAHEAGWRTVYTVHNLQYQGRWNLAEASGWSGLGPAWLTHEGAEFYGDLNLMKAGLIAANHVTTVSPQYAREITTQQYGEGLQGVLLRLTLEGRLSGIINGLDQERWNPRTDPDVPAYSDLAGKAAATQALRTEFGLDKAPVLGVVSRLADQKGMDLLIEALPRLVHNWNVVVLGGGDPLLTAALEGWAQHPRVSFAQGMNEALAHQIYAGSDAFAMPSRFEPCGLSQMIAMRYGTLPVVRETGGLVDTVPPDVGFRFQPATPEALVEACQQARAAFEDQSDWEARVARAMALDFSWDGPAREYLALYERVVTG</sequence>
<organism>
    <name type="scientific">Deinococcus deserti (strain DSM 17065 / CIP 109153 / LMG 22923 / VCD115)</name>
    <dbReference type="NCBI Taxonomy" id="546414"/>
    <lineage>
        <taxon>Bacteria</taxon>
        <taxon>Thermotogati</taxon>
        <taxon>Deinococcota</taxon>
        <taxon>Deinococci</taxon>
        <taxon>Deinococcales</taxon>
        <taxon>Deinococcaceae</taxon>
        <taxon>Deinococcus</taxon>
    </lineage>
</organism>
<reference key="1">
    <citation type="journal article" date="2009" name="PLoS Genet.">
        <title>Alliance of proteomics and genomics to unravel the specificities of Sahara bacterium Deinococcus deserti.</title>
        <authorList>
            <person name="de Groot A."/>
            <person name="Dulermo R."/>
            <person name="Ortet P."/>
            <person name="Blanchard L."/>
            <person name="Guerin P."/>
            <person name="Fernandez B."/>
            <person name="Vacherie B."/>
            <person name="Dossat C."/>
            <person name="Jolivet E."/>
            <person name="Siguier P."/>
            <person name="Chandler M."/>
            <person name="Barakat M."/>
            <person name="Dedieu A."/>
            <person name="Barbe V."/>
            <person name="Heulin T."/>
            <person name="Sommer S."/>
            <person name="Achouak W."/>
            <person name="Armengaud J."/>
        </authorList>
    </citation>
    <scope>NUCLEOTIDE SEQUENCE [LARGE SCALE GENOMIC DNA]</scope>
    <source>
        <strain>DSM 17065 / CIP 109153 / LMG 22923 / VCD115</strain>
    </source>
</reference>
<proteinExistence type="inferred from homology"/>
<accession>C1CWY8</accession>
<feature type="chain" id="PRO_1000206425" description="Glycogen synthase">
    <location>
        <begin position="1"/>
        <end position="446"/>
    </location>
</feature>
<feature type="binding site" evidence="1">
    <location>
        <position position="15"/>
    </location>
    <ligand>
        <name>ADP-alpha-D-glucose</name>
        <dbReference type="ChEBI" id="CHEBI:57498"/>
    </ligand>
</feature>
<keyword id="KW-0320">Glycogen biosynthesis</keyword>
<keyword id="KW-0328">Glycosyltransferase</keyword>
<keyword id="KW-1185">Reference proteome</keyword>
<keyword id="KW-0808">Transferase</keyword>
<dbReference type="EC" id="2.4.1.21" evidence="1"/>
<dbReference type="EMBL" id="CP001114">
    <property type="protein sequence ID" value="ACO46705.1"/>
    <property type="molecule type" value="Genomic_DNA"/>
</dbReference>
<dbReference type="RefSeq" id="WP_012693827.1">
    <property type="nucleotide sequence ID" value="NC_012526.1"/>
</dbReference>
<dbReference type="SMR" id="C1CWY8"/>
<dbReference type="STRING" id="546414.Deide_17340"/>
<dbReference type="CAZy" id="GT5">
    <property type="family name" value="Glycosyltransferase Family 5"/>
</dbReference>
<dbReference type="PaxDb" id="546414-Deide_17340"/>
<dbReference type="KEGG" id="ddr:Deide_17340"/>
<dbReference type="eggNOG" id="COG0297">
    <property type="taxonomic scope" value="Bacteria"/>
</dbReference>
<dbReference type="HOGENOM" id="CLU_009583_18_5_0"/>
<dbReference type="OrthoDB" id="9808590at2"/>
<dbReference type="UniPathway" id="UPA00164"/>
<dbReference type="Proteomes" id="UP000002208">
    <property type="component" value="Chromosome"/>
</dbReference>
<dbReference type="GO" id="GO:0009011">
    <property type="term" value="F:alpha-1,4-glucan glucosyltransferase (ADP-glucose donor) activity"/>
    <property type="evidence" value="ECO:0007669"/>
    <property type="project" value="UniProtKB-UniRule"/>
</dbReference>
<dbReference type="GO" id="GO:0004373">
    <property type="term" value="F:alpha-1,4-glucan glucosyltransferase (UDP-glucose donor) activity"/>
    <property type="evidence" value="ECO:0007669"/>
    <property type="project" value="InterPro"/>
</dbReference>
<dbReference type="GO" id="GO:0005978">
    <property type="term" value="P:glycogen biosynthetic process"/>
    <property type="evidence" value="ECO:0007669"/>
    <property type="project" value="UniProtKB-UniRule"/>
</dbReference>
<dbReference type="CDD" id="cd03791">
    <property type="entry name" value="GT5_Glycogen_synthase_DULL1-like"/>
    <property type="match status" value="1"/>
</dbReference>
<dbReference type="Gene3D" id="3.40.50.2000">
    <property type="entry name" value="Glycogen Phosphorylase B"/>
    <property type="match status" value="2"/>
</dbReference>
<dbReference type="HAMAP" id="MF_00484">
    <property type="entry name" value="Glycogen_synth"/>
    <property type="match status" value="1"/>
</dbReference>
<dbReference type="InterPro" id="IPR011835">
    <property type="entry name" value="GS/SS"/>
</dbReference>
<dbReference type="InterPro" id="IPR013534">
    <property type="entry name" value="Starch_synth_cat_dom"/>
</dbReference>
<dbReference type="NCBIfam" id="TIGR02095">
    <property type="entry name" value="glgA"/>
    <property type="match status" value="1"/>
</dbReference>
<dbReference type="PANTHER" id="PTHR45825:SF11">
    <property type="entry name" value="ALPHA AMYLASE DOMAIN-CONTAINING PROTEIN"/>
    <property type="match status" value="1"/>
</dbReference>
<dbReference type="PANTHER" id="PTHR45825">
    <property type="entry name" value="GRANULE-BOUND STARCH SYNTHASE 1, CHLOROPLASTIC/AMYLOPLASTIC"/>
    <property type="match status" value="1"/>
</dbReference>
<dbReference type="Pfam" id="PF13692">
    <property type="entry name" value="Glyco_trans_1_4"/>
    <property type="match status" value="1"/>
</dbReference>
<dbReference type="Pfam" id="PF08323">
    <property type="entry name" value="Glyco_transf_5"/>
    <property type="match status" value="1"/>
</dbReference>
<dbReference type="SUPFAM" id="SSF53756">
    <property type="entry name" value="UDP-Glycosyltransferase/glycogen phosphorylase"/>
    <property type="match status" value="1"/>
</dbReference>
<comment type="function">
    <text evidence="1">Synthesizes alpha-1,4-glucan chains using ADP-glucose.</text>
</comment>
<comment type="catalytic activity">
    <reaction evidence="1">
        <text>[(1-&gt;4)-alpha-D-glucosyl](n) + ADP-alpha-D-glucose = [(1-&gt;4)-alpha-D-glucosyl](n+1) + ADP + H(+)</text>
        <dbReference type="Rhea" id="RHEA:18189"/>
        <dbReference type="Rhea" id="RHEA-COMP:9584"/>
        <dbReference type="Rhea" id="RHEA-COMP:9587"/>
        <dbReference type="ChEBI" id="CHEBI:15378"/>
        <dbReference type="ChEBI" id="CHEBI:15444"/>
        <dbReference type="ChEBI" id="CHEBI:57498"/>
        <dbReference type="ChEBI" id="CHEBI:456216"/>
        <dbReference type="EC" id="2.4.1.21"/>
    </reaction>
</comment>
<comment type="pathway">
    <text evidence="1">Glycan biosynthesis; glycogen biosynthesis.</text>
</comment>
<comment type="similarity">
    <text evidence="1">Belongs to the glycosyltransferase 1 family. Bacterial/plant glycogen synthase subfamily.</text>
</comment>
<gene>
    <name evidence="1" type="primary">glgA</name>
    <name type="ordered locus">Deide_17340</name>
</gene>
<name>GLGA_DEIDV</name>
<evidence type="ECO:0000255" key="1">
    <source>
        <dbReference type="HAMAP-Rule" id="MF_00484"/>
    </source>
</evidence>
<protein>
    <recommendedName>
        <fullName evidence="1">Glycogen synthase</fullName>
        <ecNumber evidence="1">2.4.1.21</ecNumber>
    </recommendedName>
    <alternativeName>
        <fullName evidence="1">Starch [bacterial glycogen] synthase</fullName>
    </alternativeName>
</protein>